<sequence>MAKQSMKAREVKRVKLADKFFAKRAELKAIISDVNASDEDRWNAVLKLQTLPRDSSPSRQRNPCRQTGRPHGYVGKFGLSRIKLREAAMRGEVPGLKKASW</sequence>
<comment type="function">
    <text evidence="1">Binds 16S rRNA, required for the assembly of 30S particles and may also be responsible for determining the conformation of the 16S rRNA at the A site.</text>
</comment>
<comment type="subunit">
    <text evidence="1">Part of the 30S ribosomal subunit. Contacts proteins S3 and S10.</text>
</comment>
<comment type="similarity">
    <text evidence="1">Belongs to the universal ribosomal protein uS14 family.</text>
</comment>
<keyword id="KW-0687">Ribonucleoprotein</keyword>
<keyword id="KW-0689">Ribosomal protein</keyword>
<keyword id="KW-0694">RNA-binding</keyword>
<keyword id="KW-0699">rRNA-binding</keyword>
<organism>
    <name type="scientific">Buchnera aphidicola subsp. Acyrthosiphon kondoi</name>
    <name type="common">Acyrthosiphon kondoi symbiotic bacterium</name>
    <dbReference type="NCBI Taxonomy" id="42474"/>
    <lineage>
        <taxon>Bacteria</taxon>
        <taxon>Pseudomonadati</taxon>
        <taxon>Pseudomonadota</taxon>
        <taxon>Gammaproteobacteria</taxon>
        <taxon>Enterobacterales</taxon>
        <taxon>Erwiniaceae</taxon>
        <taxon>Buchnera</taxon>
    </lineage>
</organism>
<evidence type="ECO:0000255" key="1">
    <source>
        <dbReference type="HAMAP-Rule" id="MF_00537"/>
    </source>
</evidence>
<evidence type="ECO:0000256" key="2">
    <source>
        <dbReference type="SAM" id="MobiDB-lite"/>
    </source>
</evidence>
<evidence type="ECO:0000305" key="3"/>
<reference key="1">
    <citation type="journal article" date="1994" name="DNA Res.">
        <title>Cloning and characterization of the ribosomal protein genes in the spc operon of a prokaryotic endosymbiont of the pea aphid, Acyrthosiphon kondoi.</title>
        <authorList>
            <person name="Abe R."/>
            <person name="Yamashita A."/>
            <person name="Isono K."/>
        </authorList>
    </citation>
    <scope>NUCLEOTIDE SEQUENCE [GENOMIC DNA]</scope>
    <source>
        <strain>Kurashiki</strain>
    </source>
</reference>
<accession>P46179</accession>
<feature type="chain" id="PRO_0000130878" description="Small ribosomal subunit protein uS14">
    <location>
        <begin position="1"/>
        <end position="101"/>
    </location>
</feature>
<feature type="region of interest" description="Disordered" evidence="2">
    <location>
        <begin position="51"/>
        <end position="72"/>
    </location>
</feature>
<feature type="compositionally biased region" description="Polar residues" evidence="2">
    <location>
        <begin position="52"/>
        <end position="65"/>
    </location>
</feature>
<protein>
    <recommendedName>
        <fullName evidence="1">Small ribosomal subunit protein uS14</fullName>
    </recommendedName>
    <alternativeName>
        <fullName evidence="3">30S ribosomal protein S14</fullName>
    </alternativeName>
</protein>
<proteinExistence type="inferred from homology"/>
<dbReference type="EMBL" id="D31786">
    <property type="protein sequence ID" value="BAA06588.1"/>
    <property type="molecule type" value="Genomic_DNA"/>
</dbReference>
<dbReference type="SMR" id="P46179"/>
<dbReference type="GO" id="GO:0005737">
    <property type="term" value="C:cytoplasm"/>
    <property type="evidence" value="ECO:0007669"/>
    <property type="project" value="UniProtKB-ARBA"/>
</dbReference>
<dbReference type="GO" id="GO:0015935">
    <property type="term" value="C:small ribosomal subunit"/>
    <property type="evidence" value="ECO:0007669"/>
    <property type="project" value="TreeGrafter"/>
</dbReference>
<dbReference type="GO" id="GO:0019843">
    <property type="term" value="F:rRNA binding"/>
    <property type="evidence" value="ECO:0007669"/>
    <property type="project" value="UniProtKB-UniRule"/>
</dbReference>
<dbReference type="GO" id="GO:0003735">
    <property type="term" value="F:structural constituent of ribosome"/>
    <property type="evidence" value="ECO:0007669"/>
    <property type="project" value="InterPro"/>
</dbReference>
<dbReference type="GO" id="GO:0006412">
    <property type="term" value="P:translation"/>
    <property type="evidence" value="ECO:0007669"/>
    <property type="project" value="UniProtKB-UniRule"/>
</dbReference>
<dbReference type="FunFam" id="1.10.287.1480:FF:000001">
    <property type="entry name" value="30S ribosomal protein S14"/>
    <property type="match status" value="1"/>
</dbReference>
<dbReference type="Gene3D" id="1.10.287.1480">
    <property type="match status" value="1"/>
</dbReference>
<dbReference type="HAMAP" id="MF_00537">
    <property type="entry name" value="Ribosomal_uS14_1"/>
    <property type="match status" value="1"/>
</dbReference>
<dbReference type="InterPro" id="IPR001209">
    <property type="entry name" value="Ribosomal_uS14"/>
</dbReference>
<dbReference type="InterPro" id="IPR023036">
    <property type="entry name" value="Ribosomal_uS14_bac/plastid"/>
</dbReference>
<dbReference type="InterPro" id="IPR018271">
    <property type="entry name" value="Ribosomal_uS14_CS"/>
</dbReference>
<dbReference type="NCBIfam" id="NF006477">
    <property type="entry name" value="PRK08881.1"/>
    <property type="match status" value="1"/>
</dbReference>
<dbReference type="PANTHER" id="PTHR19836">
    <property type="entry name" value="30S RIBOSOMAL PROTEIN S14"/>
    <property type="match status" value="1"/>
</dbReference>
<dbReference type="PANTHER" id="PTHR19836:SF19">
    <property type="entry name" value="SMALL RIBOSOMAL SUBUNIT PROTEIN US14M"/>
    <property type="match status" value="1"/>
</dbReference>
<dbReference type="Pfam" id="PF00253">
    <property type="entry name" value="Ribosomal_S14"/>
    <property type="match status" value="1"/>
</dbReference>
<dbReference type="SUPFAM" id="SSF57716">
    <property type="entry name" value="Glucocorticoid receptor-like (DNA-binding domain)"/>
    <property type="match status" value="1"/>
</dbReference>
<dbReference type="PROSITE" id="PS00527">
    <property type="entry name" value="RIBOSOMAL_S14"/>
    <property type="match status" value="1"/>
</dbReference>
<gene>
    <name evidence="1" type="primary">rpsN</name>
</gene>
<name>RS14_BUCAK</name>